<sequence length="125" mass="14077">MARIAGVDLPSNKRIVIGLTYIFGIGKTSSQNILKKAGIDESIRVKDLSDEHEAAIRRVIEESYQVEGDLRSEVNLNIKRLMDVGCYRGFRHRRGLPVNGQRTRTNARTRKGVKKTVANKKKATK</sequence>
<accession>B0SA23</accession>
<comment type="function">
    <text evidence="1">Located at the top of the head of the 30S subunit, it contacts several helices of the 16S rRNA. In the 70S ribosome it contacts the 23S rRNA (bridge B1a) and protein L5 of the 50S subunit (bridge B1b), connecting the 2 subunits; these bridges are implicated in subunit movement. Contacts the tRNAs in the A and P-sites.</text>
</comment>
<comment type="subunit">
    <text evidence="1">Part of the 30S ribosomal subunit. Forms a loose heterodimer with protein S19. Forms two bridges to the 50S subunit in the 70S ribosome.</text>
</comment>
<comment type="similarity">
    <text evidence="1">Belongs to the universal ribosomal protein uS13 family.</text>
</comment>
<name>RS13_LEPBA</name>
<organism>
    <name type="scientific">Leptospira biflexa serovar Patoc (strain Patoc 1 / Ames)</name>
    <dbReference type="NCBI Taxonomy" id="355278"/>
    <lineage>
        <taxon>Bacteria</taxon>
        <taxon>Pseudomonadati</taxon>
        <taxon>Spirochaetota</taxon>
        <taxon>Spirochaetia</taxon>
        <taxon>Leptospirales</taxon>
        <taxon>Leptospiraceae</taxon>
        <taxon>Leptospira</taxon>
    </lineage>
</organism>
<proteinExistence type="inferred from homology"/>
<dbReference type="EMBL" id="CP000777">
    <property type="protein sequence ID" value="ABZ94393.1"/>
    <property type="molecule type" value="Genomic_DNA"/>
</dbReference>
<dbReference type="RefSeq" id="WP_012388923.1">
    <property type="nucleotide sequence ID" value="NC_010842.1"/>
</dbReference>
<dbReference type="SMR" id="B0SA23"/>
<dbReference type="KEGG" id="lbf:LBF_1889"/>
<dbReference type="HOGENOM" id="CLU_103849_1_2_12"/>
<dbReference type="GO" id="GO:0005829">
    <property type="term" value="C:cytosol"/>
    <property type="evidence" value="ECO:0007669"/>
    <property type="project" value="TreeGrafter"/>
</dbReference>
<dbReference type="GO" id="GO:0015935">
    <property type="term" value="C:small ribosomal subunit"/>
    <property type="evidence" value="ECO:0007669"/>
    <property type="project" value="TreeGrafter"/>
</dbReference>
<dbReference type="GO" id="GO:0019843">
    <property type="term" value="F:rRNA binding"/>
    <property type="evidence" value="ECO:0007669"/>
    <property type="project" value="UniProtKB-UniRule"/>
</dbReference>
<dbReference type="GO" id="GO:0003735">
    <property type="term" value="F:structural constituent of ribosome"/>
    <property type="evidence" value="ECO:0007669"/>
    <property type="project" value="InterPro"/>
</dbReference>
<dbReference type="GO" id="GO:0000049">
    <property type="term" value="F:tRNA binding"/>
    <property type="evidence" value="ECO:0007669"/>
    <property type="project" value="UniProtKB-UniRule"/>
</dbReference>
<dbReference type="GO" id="GO:0006412">
    <property type="term" value="P:translation"/>
    <property type="evidence" value="ECO:0007669"/>
    <property type="project" value="UniProtKB-UniRule"/>
</dbReference>
<dbReference type="FunFam" id="1.10.8.50:FF:000001">
    <property type="entry name" value="30S ribosomal protein S13"/>
    <property type="match status" value="1"/>
</dbReference>
<dbReference type="FunFam" id="4.10.910.10:FF:000001">
    <property type="entry name" value="30S ribosomal protein S13"/>
    <property type="match status" value="1"/>
</dbReference>
<dbReference type="Gene3D" id="1.10.8.50">
    <property type="match status" value="1"/>
</dbReference>
<dbReference type="Gene3D" id="4.10.910.10">
    <property type="entry name" value="30s ribosomal protein s13, domain 2"/>
    <property type="match status" value="1"/>
</dbReference>
<dbReference type="HAMAP" id="MF_01315">
    <property type="entry name" value="Ribosomal_uS13"/>
    <property type="match status" value="1"/>
</dbReference>
<dbReference type="InterPro" id="IPR027437">
    <property type="entry name" value="Rbsml_uS13_C"/>
</dbReference>
<dbReference type="InterPro" id="IPR001892">
    <property type="entry name" value="Ribosomal_uS13"/>
</dbReference>
<dbReference type="InterPro" id="IPR010979">
    <property type="entry name" value="Ribosomal_uS13-like_H2TH"/>
</dbReference>
<dbReference type="InterPro" id="IPR019980">
    <property type="entry name" value="Ribosomal_uS13_bac-type"/>
</dbReference>
<dbReference type="InterPro" id="IPR018269">
    <property type="entry name" value="Ribosomal_uS13_CS"/>
</dbReference>
<dbReference type="NCBIfam" id="TIGR03631">
    <property type="entry name" value="uS13_bact"/>
    <property type="match status" value="1"/>
</dbReference>
<dbReference type="PANTHER" id="PTHR10871">
    <property type="entry name" value="30S RIBOSOMAL PROTEIN S13/40S RIBOSOMAL PROTEIN S18"/>
    <property type="match status" value="1"/>
</dbReference>
<dbReference type="PANTHER" id="PTHR10871:SF1">
    <property type="entry name" value="SMALL RIBOSOMAL SUBUNIT PROTEIN US13M"/>
    <property type="match status" value="1"/>
</dbReference>
<dbReference type="Pfam" id="PF00416">
    <property type="entry name" value="Ribosomal_S13"/>
    <property type="match status" value="1"/>
</dbReference>
<dbReference type="PIRSF" id="PIRSF002134">
    <property type="entry name" value="Ribosomal_S13"/>
    <property type="match status" value="1"/>
</dbReference>
<dbReference type="SUPFAM" id="SSF46946">
    <property type="entry name" value="S13-like H2TH domain"/>
    <property type="match status" value="1"/>
</dbReference>
<dbReference type="PROSITE" id="PS00646">
    <property type="entry name" value="RIBOSOMAL_S13_1"/>
    <property type="match status" value="1"/>
</dbReference>
<dbReference type="PROSITE" id="PS50159">
    <property type="entry name" value="RIBOSOMAL_S13_2"/>
    <property type="match status" value="1"/>
</dbReference>
<evidence type="ECO:0000255" key="1">
    <source>
        <dbReference type="HAMAP-Rule" id="MF_01315"/>
    </source>
</evidence>
<evidence type="ECO:0000256" key="2">
    <source>
        <dbReference type="SAM" id="MobiDB-lite"/>
    </source>
</evidence>
<evidence type="ECO:0000305" key="3"/>
<feature type="chain" id="PRO_1000141279" description="Small ribosomal subunit protein uS13">
    <location>
        <begin position="1"/>
        <end position="125"/>
    </location>
</feature>
<feature type="region of interest" description="Disordered" evidence="2">
    <location>
        <begin position="95"/>
        <end position="125"/>
    </location>
</feature>
<feature type="compositionally biased region" description="Basic residues" evidence="2">
    <location>
        <begin position="105"/>
        <end position="125"/>
    </location>
</feature>
<protein>
    <recommendedName>
        <fullName evidence="1">Small ribosomal subunit protein uS13</fullName>
    </recommendedName>
    <alternativeName>
        <fullName evidence="3">30S ribosomal protein S13</fullName>
    </alternativeName>
</protein>
<gene>
    <name evidence="1" type="primary">rpsM</name>
    <name type="ordered locus">LBF_1889</name>
</gene>
<reference key="1">
    <citation type="journal article" date="2008" name="PLoS ONE">
        <title>Genome sequence of the saprophyte Leptospira biflexa provides insights into the evolution of Leptospira and the pathogenesis of leptospirosis.</title>
        <authorList>
            <person name="Picardeau M."/>
            <person name="Bulach D.M."/>
            <person name="Bouchier C."/>
            <person name="Zuerner R.L."/>
            <person name="Zidane N."/>
            <person name="Wilson P.J."/>
            <person name="Creno S."/>
            <person name="Kuczek E.S."/>
            <person name="Bommezzadri S."/>
            <person name="Davis J.C."/>
            <person name="McGrath A."/>
            <person name="Johnson M.J."/>
            <person name="Boursaux-Eude C."/>
            <person name="Seemann T."/>
            <person name="Rouy Z."/>
            <person name="Coppel R.L."/>
            <person name="Rood J.I."/>
            <person name="Lajus A."/>
            <person name="Davies J.K."/>
            <person name="Medigue C."/>
            <person name="Adler B."/>
        </authorList>
    </citation>
    <scope>NUCLEOTIDE SEQUENCE [LARGE SCALE GENOMIC DNA]</scope>
    <source>
        <strain>Patoc 1 / Ames</strain>
    </source>
</reference>
<keyword id="KW-0687">Ribonucleoprotein</keyword>
<keyword id="KW-0689">Ribosomal protein</keyword>
<keyword id="KW-0694">RNA-binding</keyword>
<keyword id="KW-0699">rRNA-binding</keyword>
<keyword id="KW-0820">tRNA-binding</keyword>